<accession>P36353</accession>
<reference key="1">
    <citation type="journal article" date="1993" name="J. Gen. Virol.">
        <title>Maize stripe virus RNA5 is of negative polarity and encodes a highly basic protein.</title>
        <authorList>
            <person name="Huiet L."/>
            <person name="Tsai J.H."/>
            <person name="Falk B.W."/>
        </authorList>
    </citation>
    <scope>NUCLEOTIDE SEQUENCE [GENOMIC RNA]</scope>
</reference>
<protein>
    <recommendedName>
        <fullName>Non-structural protein NS5</fullName>
    </recommendedName>
</protein>
<feature type="chain" id="PRO_0000222533" description="Non-structural protein NS5">
    <location>
        <begin position="1"/>
        <end position="375"/>
    </location>
</feature>
<dbReference type="EMBL" id="L13446">
    <property type="protein sequence ID" value="AAA46635.1"/>
    <property type="molecule type" value="Genomic_RNA"/>
</dbReference>
<dbReference type="EMBL" id="S58504">
    <property type="protein sequence ID" value="AAB26111.1"/>
    <property type="molecule type" value="Genomic_RNA"/>
</dbReference>
<dbReference type="PIR" id="JQ1963">
    <property type="entry name" value="JQ1963"/>
</dbReference>
<dbReference type="OrthoDB" id="30152at10239"/>
<dbReference type="Proteomes" id="UP000234995">
    <property type="component" value="Genome"/>
</dbReference>
<name>VNS5_MSTV</name>
<organismHost>
    <name type="scientific">Rottboellia</name>
    <dbReference type="NCBI Taxonomy" id="300124"/>
</organismHost>
<organismHost>
    <name type="scientific">Sorghum bicolor</name>
    <name type="common">Sorghum</name>
    <name type="synonym">Sorghum vulgare</name>
    <dbReference type="NCBI Taxonomy" id="4558"/>
</organismHost>
<organismHost>
    <name type="scientific">Zea mays</name>
    <name type="common">Maize</name>
    <dbReference type="NCBI Taxonomy" id="4577"/>
</organismHost>
<proteinExistence type="predicted"/>
<gene>
    <name type="primary">NS-5</name>
</gene>
<organism>
    <name type="scientific">Maize stripe virus</name>
    <name type="common">MStV</name>
    <dbReference type="NCBI Taxonomy" id="3052767"/>
    <lineage>
        <taxon>Viruses</taxon>
        <taxon>Riboviria</taxon>
        <taxon>Orthornavirae</taxon>
        <taxon>Negarnaviricota</taxon>
        <taxon>Polyploviricotina</taxon>
        <taxon>Ellioviricetes</taxon>
        <taxon>Bunyavirales</taxon>
        <taxon>Phenuiviridae</taxon>
        <taxon>Tenuivirus</taxon>
    </lineage>
</organism>
<sequence length="375" mass="44281">MAWTGPIKGTFSGMVPRCLRRTPEQTRDVIDSERLLYHRFRALFREGASQSPLETCCRNHKRSSARADQTNIRVKKTMVAKTRNPRAIHPLNEKVYSVRKIFKQLPSNKPSRIVPVRENGCRWRKVVYHRAHFEELPMSFKLSPRAYPRFNCLVRKHGYGKTIRMVSCYASGISEAKNSLARTIREKFARSAYLSGKRQVPPPLKREDFGTWNDYREELKKNQTKWYLCRVHYRQAYDRLYDQEFRYWKGHCSFETTRPRVRCGDWQSPLDSLVALQSPPMDLVCNAPTLLPTAIPVPDHPSYRKYKLSDLSWTKQHERAVREDQKRLKRAVGEKDKIKDKYGVQHERLYRQNFMKNFRRIAEMGRSSAPRGPFL</sequence>